<comment type="function">
    <text evidence="1">Dual-function protein that regulates the transcription of class 2 flagellar operons and that also acts as an export chaperone for the filament-capping protein FliD. As a transcriptional regulator, acts as an anti-FlhDC factor; it directly binds FlhC, thus inhibiting the binding of the FlhC/FlhD complex to class 2 promoters, resulting in decreased expression of class 2 flagellar operons. As a chaperone, effects FliD transition to the membrane by preventing its premature polymerization, and by directing it to the export apparatus.</text>
</comment>
<comment type="subunit">
    <text evidence="1">Homodimer. Interacts with FliD and FlhC.</text>
</comment>
<comment type="subcellular location">
    <subcellularLocation>
        <location evidence="1">Cytoplasm</location>
        <location evidence="1">Cytosol</location>
    </subcellularLocation>
</comment>
<comment type="similarity">
    <text evidence="1">Belongs to the FliT family.</text>
</comment>
<dbReference type="EMBL" id="CP000950">
    <property type="protein sequence ID" value="ACA68661.1"/>
    <property type="molecule type" value="Genomic_DNA"/>
</dbReference>
<dbReference type="RefSeq" id="WP_011192185.1">
    <property type="nucleotide sequence ID" value="NZ_CP009792.1"/>
</dbReference>
<dbReference type="SMR" id="B1JNX5"/>
<dbReference type="GeneID" id="49786212"/>
<dbReference type="KEGG" id="ypy:YPK_2384"/>
<dbReference type="PATRIC" id="fig|502800.11.peg.3069"/>
<dbReference type="GO" id="GO:0005829">
    <property type="term" value="C:cytosol"/>
    <property type="evidence" value="ECO:0007669"/>
    <property type="project" value="UniProtKB-SubCell"/>
</dbReference>
<dbReference type="GO" id="GO:0044781">
    <property type="term" value="P:bacterial-type flagellum organization"/>
    <property type="evidence" value="ECO:0007669"/>
    <property type="project" value="UniProtKB-KW"/>
</dbReference>
<dbReference type="GO" id="GO:1902209">
    <property type="term" value="P:negative regulation of bacterial-type flagellum assembly"/>
    <property type="evidence" value="ECO:0007669"/>
    <property type="project" value="UniProtKB-UniRule"/>
</dbReference>
<dbReference type="GO" id="GO:0006457">
    <property type="term" value="P:protein folding"/>
    <property type="evidence" value="ECO:0007669"/>
    <property type="project" value="UniProtKB-UniRule"/>
</dbReference>
<dbReference type="Gene3D" id="1.20.58.380">
    <property type="entry name" value="Flagellar protein flit"/>
    <property type="match status" value="1"/>
</dbReference>
<dbReference type="HAMAP" id="MF_01180">
    <property type="entry name" value="FliT"/>
    <property type="match status" value="1"/>
</dbReference>
<dbReference type="InterPro" id="IPR008622">
    <property type="entry name" value="FliT"/>
</dbReference>
<dbReference type="NCBIfam" id="NF007836">
    <property type="entry name" value="PRK10548.1"/>
    <property type="match status" value="1"/>
</dbReference>
<dbReference type="Pfam" id="PF05400">
    <property type="entry name" value="FliT"/>
    <property type="match status" value="1"/>
</dbReference>
<reference key="1">
    <citation type="submission" date="2008-02" db="EMBL/GenBank/DDBJ databases">
        <title>Complete sequence of Yersinia pseudotuberculosis YPIII.</title>
        <authorList>
            <consortium name="US DOE Joint Genome Institute"/>
            <person name="Copeland A."/>
            <person name="Lucas S."/>
            <person name="Lapidus A."/>
            <person name="Glavina del Rio T."/>
            <person name="Dalin E."/>
            <person name="Tice H."/>
            <person name="Bruce D."/>
            <person name="Goodwin L."/>
            <person name="Pitluck S."/>
            <person name="Munk A.C."/>
            <person name="Brettin T."/>
            <person name="Detter J.C."/>
            <person name="Han C."/>
            <person name="Tapia R."/>
            <person name="Schmutz J."/>
            <person name="Larimer F."/>
            <person name="Land M."/>
            <person name="Hauser L."/>
            <person name="Challacombe J.F."/>
            <person name="Green L."/>
            <person name="Lindler L.E."/>
            <person name="Nikolich M.P."/>
            <person name="Richardson P."/>
        </authorList>
    </citation>
    <scope>NUCLEOTIDE SEQUENCE [LARGE SCALE GENOMIC DNA]</scope>
    <source>
        <strain>YPIII</strain>
    </source>
</reference>
<sequence length="120" mass="13869">MERHQHLLSEYQQILTLSEQMLMLATVENWDALVDLEMAYLKAVENTANITISSCSSPVLQELLRQKLRSILENEIEIKRLLQRRLDKLSELVGQSTRQQAVNRTYGQFPDQALLLGETQ</sequence>
<protein>
    <recommendedName>
        <fullName evidence="1">Flagellar protein FliT</fullName>
    </recommendedName>
</protein>
<feature type="chain" id="PRO_0000353904" description="Flagellar protein FliT">
    <location>
        <begin position="1"/>
        <end position="120"/>
    </location>
</feature>
<feature type="region of interest" description="Required for homodimerization" evidence="1">
    <location>
        <begin position="1"/>
        <end position="50"/>
    </location>
</feature>
<feature type="region of interest" description="FliD binding" evidence="1">
    <location>
        <begin position="60"/>
        <end position="98"/>
    </location>
</feature>
<organism>
    <name type="scientific">Yersinia pseudotuberculosis serotype O:3 (strain YPIII)</name>
    <dbReference type="NCBI Taxonomy" id="502800"/>
    <lineage>
        <taxon>Bacteria</taxon>
        <taxon>Pseudomonadati</taxon>
        <taxon>Pseudomonadota</taxon>
        <taxon>Gammaproteobacteria</taxon>
        <taxon>Enterobacterales</taxon>
        <taxon>Yersiniaceae</taxon>
        <taxon>Yersinia</taxon>
    </lineage>
</organism>
<proteinExistence type="inferred from homology"/>
<accession>B1JNX5</accession>
<gene>
    <name evidence="1" type="primary">fliT</name>
    <name type="ordered locus">YPK_2384</name>
</gene>
<evidence type="ECO:0000255" key="1">
    <source>
        <dbReference type="HAMAP-Rule" id="MF_01180"/>
    </source>
</evidence>
<keyword id="KW-1005">Bacterial flagellum biogenesis</keyword>
<keyword id="KW-0143">Chaperone</keyword>
<keyword id="KW-0963">Cytoplasm</keyword>
<keyword id="KW-0678">Repressor</keyword>
<keyword id="KW-0804">Transcription</keyword>
<keyword id="KW-0805">Transcription regulation</keyword>
<name>FLIT_YERPY</name>